<protein>
    <recommendedName>
        <fullName>Acidic leucine-rich nuclear phosphoprotein 32 family member B</fullName>
    </recommendedName>
</protein>
<feature type="chain" id="PRO_0000236249" description="Acidic leucine-rich nuclear phosphoprotein 32 family member B">
    <location>
        <begin position="1"/>
        <end position="261"/>
    </location>
</feature>
<feature type="repeat" description="LRR 1">
    <location>
        <begin position="16"/>
        <end position="40"/>
    </location>
</feature>
<feature type="repeat" description="LRR 2">
    <location>
        <begin position="43"/>
        <end position="64"/>
    </location>
</feature>
<feature type="repeat" description="LRR 3">
    <location>
        <begin position="65"/>
        <end position="87"/>
    </location>
</feature>
<feature type="repeat" description="LRR 4">
    <location>
        <begin position="89"/>
        <end position="110"/>
    </location>
</feature>
<feature type="domain" description="LRRCT">
    <location>
        <begin position="123"/>
        <end position="161"/>
    </location>
</feature>
<feature type="region of interest" description="Disordered" evidence="5">
    <location>
        <begin position="149"/>
        <end position="261"/>
    </location>
</feature>
<feature type="short sequence motif" description="Nuclear localization signal" evidence="2">
    <location>
        <begin position="249"/>
        <end position="252"/>
    </location>
</feature>
<feature type="compositionally biased region" description="Acidic residues" evidence="5">
    <location>
        <begin position="157"/>
        <end position="243"/>
    </location>
</feature>
<feature type="compositionally biased region" description="Basic and acidic residues" evidence="5">
    <location>
        <begin position="244"/>
        <end position="254"/>
    </location>
</feature>
<feature type="modified residue" description="N6-acetyllysine" evidence="2">
    <location>
        <position position="86"/>
    </location>
</feature>
<feature type="modified residue" description="Phosphoserine" evidence="4">
    <location>
        <position position="158"/>
    </location>
</feature>
<feature type="modified residue" description="Phosphothreonine" evidence="2">
    <location>
        <position position="254"/>
    </location>
</feature>
<proteinExistence type="evidence at transcript level"/>
<dbReference type="EMBL" id="BC102954">
    <property type="protein sequence ID" value="AAI02955.1"/>
    <property type="molecule type" value="mRNA"/>
</dbReference>
<dbReference type="RefSeq" id="NP_001030246.1">
    <property type="nucleotide sequence ID" value="NM_001035074.1"/>
</dbReference>
<dbReference type="BMRB" id="Q3SZC6"/>
<dbReference type="SMR" id="Q3SZC6"/>
<dbReference type="FunCoup" id="Q3SZC6">
    <property type="interactions" value="3173"/>
</dbReference>
<dbReference type="IntAct" id="Q3SZC6">
    <property type="interactions" value="1"/>
</dbReference>
<dbReference type="STRING" id="9913.ENSBTAP00000028486"/>
<dbReference type="PaxDb" id="9913-ENSBTAP00000028486"/>
<dbReference type="PeptideAtlas" id="Q3SZC6"/>
<dbReference type="GeneID" id="509685"/>
<dbReference type="KEGG" id="bta:509685"/>
<dbReference type="CTD" id="10541"/>
<dbReference type="VEuPathDB" id="HostDB:ENSBTAG00000021367"/>
<dbReference type="eggNOG" id="KOG2739">
    <property type="taxonomic scope" value="Eukaryota"/>
</dbReference>
<dbReference type="InParanoid" id="Q3SZC6"/>
<dbReference type="OrthoDB" id="2160613at2759"/>
<dbReference type="Proteomes" id="UP000009136">
    <property type="component" value="Chromosome 8"/>
</dbReference>
<dbReference type="Bgee" id="ENSBTAG00000021367">
    <property type="expression patterns" value="Expressed in pharyngeal tonsil and 102 other cell types or tissues"/>
</dbReference>
<dbReference type="GO" id="GO:0005737">
    <property type="term" value="C:cytoplasm"/>
    <property type="evidence" value="ECO:0000250"/>
    <property type="project" value="UniProtKB"/>
</dbReference>
<dbReference type="GO" id="GO:0005783">
    <property type="term" value="C:endoplasmic reticulum"/>
    <property type="evidence" value="ECO:0000250"/>
    <property type="project" value="UniProtKB"/>
</dbReference>
<dbReference type="GO" id="GO:0005634">
    <property type="term" value="C:nucleus"/>
    <property type="evidence" value="ECO:0000250"/>
    <property type="project" value="UniProtKB"/>
</dbReference>
<dbReference type="GO" id="GO:0048471">
    <property type="term" value="C:perinuclear region of cytoplasm"/>
    <property type="evidence" value="ECO:0000250"/>
    <property type="project" value="UniProtKB"/>
</dbReference>
<dbReference type="GO" id="GO:0042393">
    <property type="term" value="F:histone binding"/>
    <property type="evidence" value="ECO:0000318"/>
    <property type="project" value="GO_Central"/>
</dbReference>
<dbReference type="GO" id="GO:0006913">
    <property type="term" value="P:nucleocytoplasmic transport"/>
    <property type="evidence" value="ECO:0000250"/>
    <property type="project" value="UniProtKB"/>
</dbReference>
<dbReference type="GO" id="GO:0042981">
    <property type="term" value="P:regulation of apoptotic process"/>
    <property type="evidence" value="ECO:0000318"/>
    <property type="project" value="GO_Central"/>
</dbReference>
<dbReference type="FunFam" id="3.80.10.10:FF:000003">
    <property type="entry name" value="Acidic leucine-rich nuclear phosphoprotein 32 family member A"/>
    <property type="match status" value="1"/>
</dbReference>
<dbReference type="Gene3D" id="3.80.10.10">
    <property type="entry name" value="Ribonuclease Inhibitor"/>
    <property type="match status" value="1"/>
</dbReference>
<dbReference type="InterPro" id="IPR045081">
    <property type="entry name" value="AN32"/>
</dbReference>
<dbReference type="InterPro" id="IPR001611">
    <property type="entry name" value="Leu-rich_rpt"/>
</dbReference>
<dbReference type="InterPro" id="IPR032675">
    <property type="entry name" value="LRR_dom_sf"/>
</dbReference>
<dbReference type="InterPro" id="IPR003603">
    <property type="entry name" value="U2A'_phosphoprotein32A_C"/>
</dbReference>
<dbReference type="PANTHER" id="PTHR11375">
    <property type="entry name" value="ACIDIC LEUCINE-RICH NUCLEAR PHOSPHOPROTEIN 32"/>
    <property type="match status" value="1"/>
</dbReference>
<dbReference type="PANTHER" id="PTHR11375:SF2">
    <property type="entry name" value="ACIDIC LEUCINE-RICH NUCLEAR PHOSPHOPROTEIN 32 FAMILY MEMBER B"/>
    <property type="match status" value="1"/>
</dbReference>
<dbReference type="Pfam" id="PF14580">
    <property type="entry name" value="LRR_9"/>
    <property type="match status" value="1"/>
</dbReference>
<dbReference type="SMART" id="SM00446">
    <property type="entry name" value="LRRcap"/>
    <property type="match status" value="1"/>
</dbReference>
<dbReference type="SUPFAM" id="SSF52058">
    <property type="entry name" value="L domain-like"/>
    <property type="match status" value="1"/>
</dbReference>
<dbReference type="PROSITE" id="PS51450">
    <property type="entry name" value="LRR"/>
    <property type="match status" value="4"/>
</dbReference>
<organism>
    <name type="scientific">Bos taurus</name>
    <name type="common">Bovine</name>
    <dbReference type="NCBI Taxonomy" id="9913"/>
    <lineage>
        <taxon>Eukaryota</taxon>
        <taxon>Metazoa</taxon>
        <taxon>Chordata</taxon>
        <taxon>Craniata</taxon>
        <taxon>Vertebrata</taxon>
        <taxon>Euteleostomi</taxon>
        <taxon>Mammalia</taxon>
        <taxon>Eutheria</taxon>
        <taxon>Laurasiatheria</taxon>
        <taxon>Artiodactyla</taxon>
        <taxon>Ruminantia</taxon>
        <taxon>Pecora</taxon>
        <taxon>Bovidae</taxon>
        <taxon>Bovinae</taxon>
        <taxon>Bos</taxon>
    </lineage>
</organism>
<gene>
    <name type="primary">ANP32B</name>
</gene>
<name>AN32B_BOVIN</name>
<sequence>MDMKRRIHLELRNRTPAAVRELVLDNCKSNDGKIEGLTAEFVNLEFLSLINVGLISVSNLPKLPKLKKLELSDNRICGGLDMLAEKLPNLTHLNLSGNKLKDISTLEPLKKLECLKSLDLFNCEVTNLNDYRESVFKLLPQLTYLDGYDREDREAPDSDAEVDGVDEEEDDEEGEDEDKEEDEDGEEEEFDDEEDDDEDEDVEGEEDEDEVSGEEEEFGHDGEVDEDDEDEDEDEDEDEEEEESGKGEKRKRETDDEGEDD</sequence>
<evidence type="ECO:0000250" key="1"/>
<evidence type="ECO:0000250" key="2">
    <source>
        <dbReference type="UniProtKB" id="Q92688"/>
    </source>
</evidence>
<evidence type="ECO:0000250" key="3">
    <source>
        <dbReference type="UniProtKB" id="Q9EST5"/>
    </source>
</evidence>
<evidence type="ECO:0000250" key="4">
    <source>
        <dbReference type="UniProtKB" id="Q9EST6"/>
    </source>
</evidence>
<evidence type="ECO:0000256" key="5">
    <source>
        <dbReference type="SAM" id="MobiDB-lite"/>
    </source>
</evidence>
<evidence type="ECO:0000305" key="6"/>
<accession>Q3SZC6</accession>
<comment type="function">
    <text evidence="2 3">Multifunctional protein that is involved in the regulation of many processes including cell proliferation, apoptosis, cell cycle progression or transcription. Regulates the proliferation of neuronal stem cells, differentiation of leukemic cells and progression from G1 to S phase of the cell cycle. As negative regulator of caspase-3-dependent apoptosis, may act as an antagonist of ANP32A in regulating tissue homeostasis. Exhibits histone chaperone properties, able to recruit histones to certain promoters, thus regulating the transcription of specific genes. Also plays an essential role in the nucleocytoplasmic transport of specific mRNAs via the uncommon nuclear mRNA export receptor XPO1/CRM1 (By similarity). Participates in the regulation of adequate adaptive immune responses by acting on mRNA expression and cell proliferation (By similarity).</text>
</comment>
<comment type="subunit">
    <text evidence="2">Interacts with histones H3 and H4. Interacts with KLF5; this interaction induces promoter region-specific histone incorporation and inhibition of histone acetylation by ANP32B.</text>
</comment>
<comment type="subcellular location">
    <subcellularLocation>
        <location evidence="2">Nucleus</location>
    </subcellularLocation>
    <text evidence="2">Accumulates in the nuclei at the S phase.</text>
</comment>
<comment type="domain">
    <text evidence="1">Histone binding is mediated by the concave surface of the LRR region.</text>
</comment>
<comment type="PTM">
    <text evidence="1">Some Glu residues are glycylated by TTLL8; a modification that generates a side chains of glycine on the gamma-carboxyl groups of specific glutamate residues.</text>
</comment>
<comment type="PTM">
    <text evidence="2">Directly cleaved by caspase-3/CASP3.</text>
</comment>
<comment type="similarity">
    <text evidence="6">Belongs to the ANP32 family.</text>
</comment>
<keyword id="KW-0007">Acetylation</keyword>
<keyword id="KW-0143">Chaperone</keyword>
<keyword id="KW-0433">Leucine-rich repeat</keyword>
<keyword id="KW-0539">Nucleus</keyword>
<keyword id="KW-0597">Phosphoprotein</keyword>
<keyword id="KW-1185">Reference proteome</keyword>
<keyword id="KW-0677">Repeat</keyword>
<reference key="1">
    <citation type="submission" date="2005-08" db="EMBL/GenBank/DDBJ databases">
        <authorList>
            <consortium name="NIH - Mammalian Gene Collection (MGC) project"/>
        </authorList>
    </citation>
    <scope>NUCLEOTIDE SEQUENCE [LARGE SCALE MRNA]</scope>
    <source>
        <strain>Crossbred X Angus</strain>
        <tissue>Ileum</tissue>
    </source>
</reference>